<evidence type="ECO:0000250" key="1"/>
<evidence type="ECO:0000255" key="2">
    <source>
        <dbReference type="PROSITE-ProRule" id="PRU01133"/>
    </source>
</evidence>
<evidence type="ECO:0000269" key="3">
    <source>
    </source>
</evidence>
<evidence type="ECO:0000269" key="4">
    <source>
    </source>
</evidence>
<evidence type="ECO:0000305" key="5"/>
<accession>Q9VGS2</accession>
<accession>Q49UC2</accession>
<accession>Q95TW0</accession>
<proteinExistence type="evidence at protein level"/>
<dbReference type="EMBL" id="AE014297">
    <property type="protein sequence ID" value="AAF54603.1"/>
    <property type="molecule type" value="Genomic_DNA"/>
</dbReference>
<dbReference type="EMBL" id="AY058482">
    <property type="protein sequence ID" value="AAZ67515.1"/>
    <property type="molecule type" value="mRNA"/>
</dbReference>
<dbReference type="RefSeq" id="NP_001303431.1">
    <property type="nucleotide sequence ID" value="NM_001316502.1"/>
</dbReference>
<dbReference type="RefSeq" id="NP_650048.1">
    <property type="nucleotide sequence ID" value="NM_141791.3"/>
</dbReference>
<dbReference type="SMR" id="Q9VGS2"/>
<dbReference type="BioGRID" id="66475">
    <property type="interactions" value="51"/>
</dbReference>
<dbReference type="DIP" id="DIP-18951N"/>
<dbReference type="FunCoup" id="Q9VGS2">
    <property type="interactions" value="1507"/>
</dbReference>
<dbReference type="IntAct" id="Q9VGS2">
    <property type="interactions" value="38"/>
</dbReference>
<dbReference type="STRING" id="7227.FBpp0312492"/>
<dbReference type="iPTMnet" id="Q9VGS2"/>
<dbReference type="PaxDb" id="7227-FBpp0081820"/>
<dbReference type="DNASU" id="41341"/>
<dbReference type="EnsemblMetazoa" id="FBtr0082344">
    <property type="protein sequence ID" value="FBpp0081820"/>
    <property type="gene ID" value="FBgn0037874"/>
</dbReference>
<dbReference type="EnsemblMetazoa" id="FBtr0347181">
    <property type="protein sequence ID" value="FBpp0312492"/>
    <property type="gene ID" value="FBgn0037874"/>
</dbReference>
<dbReference type="GeneID" id="41341"/>
<dbReference type="KEGG" id="dme:Dmel_CG4800"/>
<dbReference type="AGR" id="FB:FBgn0037874"/>
<dbReference type="CTD" id="41341"/>
<dbReference type="FlyBase" id="FBgn0037874">
    <property type="gene designation" value="Tctp"/>
</dbReference>
<dbReference type="VEuPathDB" id="VectorBase:FBgn0037874"/>
<dbReference type="eggNOG" id="KOG1727">
    <property type="taxonomic scope" value="Eukaryota"/>
</dbReference>
<dbReference type="GeneTree" id="ENSGT00390000006051"/>
<dbReference type="HOGENOM" id="CLU_095877_0_1_1"/>
<dbReference type="InParanoid" id="Q9VGS2"/>
<dbReference type="OMA" id="CAMITEG"/>
<dbReference type="OrthoDB" id="10248936at2759"/>
<dbReference type="PhylomeDB" id="Q9VGS2"/>
<dbReference type="SignaLink" id="Q9VGS2"/>
<dbReference type="BioGRID-ORCS" id="41341">
    <property type="hits" value="0 hits in 3 CRISPR screens"/>
</dbReference>
<dbReference type="ChiTaRS" id="Tctp">
    <property type="organism name" value="fly"/>
</dbReference>
<dbReference type="GenomeRNAi" id="41341"/>
<dbReference type="PRO" id="PR:Q9VGS2"/>
<dbReference type="Proteomes" id="UP000000803">
    <property type="component" value="Chromosome 3R"/>
</dbReference>
<dbReference type="Bgee" id="FBgn0037874">
    <property type="expression patterns" value="Expressed in capitellum (Drosophila) and 281 other cell types or tissues"/>
</dbReference>
<dbReference type="ExpressionAtlas" id="Q9VGS2">
    <property type="expression patterns" value="baseline and differential"/>
</dbReference>
<dbReference type="GO" id="GO:0005737">
    <property type="term" value="C:cytoplasm"/>
    <property type="evidence" value="ECO:0000318"/>
    <property type="project" value="GO_Central"/>
</dbReference>
<dbReference type="GO" id="GO:0005881">
    <property type="term" value="C:cytoplasmic microtubule"/>
    <property type="evidence" value="ECO:0000250"/>
    <property type="project" value="UniProtKB"/>
</dbReference>
<dbReference type="GO" id="GO:0005634">
    <property type="term" value="C:nucleus"/>
    <property type="evidence" value="ECO:0000314"/>
    <property type="project" value="FlyBase"/>
</dbReference>
<dbReference type="GO" id="GO:0005700">
    <property type="term" value="C:polytene chromosome"/>
    <property type="evidence" value="ECO:0000314"/>
    <property type="project" value="FlyBase"/>
</dbReference>
<dbReference type="GO" id="GO:0005509">
    <property type="term" value="F:calcium ion binding"/>
    <property type="evidence" value="ECO:0000250"/>
    <property type="project" value="UniProtKB"/>
</dbReference>
<dbReference type="GO" id="GO:0005085">
    <property type="term" value="F:guanyl-nucleotide exchange factor activity"/>
    <property type="evidence" value="ECO:0000314"/>
    <property type="project" value="FlyBase"/>
</dbReference>
<dbReference type="GO" id="GO:0030295">
    <property type="term" value="F:protein kinase activator activity"/>
    <property type="evidence" value="ECO:0000314"/>
    <property type="project" value="FlyBase"/>
</dbReference>
<dbReference type="GO" id="GO:0071480">
    <property type="term" value="P:cellular response to gamma radiation"/>
    <property type="evidence" value="ECO:0000315"/>
    <property type="project" value="FlyBase"/>
</dbReference>
<dbReference type="GO" id="GO:0006302">
    <property type="term" value="P:double-strand break repair"/>
    <property type="evidence" value="ECO:0000315"/>
    <property type="project" value="FlyBase"/>
</dbReference>
<dbReference type="GO" id="GO:0007095">
    <property type="term" value="P:mitotic G2 DNA damage checkpoint signaling"/>
    <property type="evidence" value="ECO:0000315"/>
    <property type="project" value="FlyBase"/>
</dbReference>
<dbReference type="GO" id="GO:0031573">
    <property type="term" value="P:mitotic intra-S DNA damage checkpoint signaling"/>
    <property type="evidence" value="ECO:0000315"/>
    <property type="project" value="FlyBase"/>
</dbReference>
<dbReference type="GO" id="GO:0045793">
    <property type="term" value="P:positive regulation of cell size"/>
    <property type="evidence" value="ECO:0000315"/>
    <property type="project" value="FlyBase"/>
</dbReference>
<dbReference type="GO" id="GO:0040018">
    <property type="term" value="P:positive regulation of multicellular organism growth"/>
    <property type="evidence" value="ECO:0000315"/>
    <property type="project" value="FlyBase"/>
</dbReference>
<dbReference type="GO" id="GO:2000736">
    <property type="term" value="P:regulation of stem cell differentiation"/>
    <property type="evidence" value="ECO:0000315"/>
    <property type="project" value="FlyBase"/>
</dbReference>
<dbReference type="FunFam" id="2.170.150.10:FF:000002">
    <property type="entry name" value="Translationally-controlled tumor protein homolog"/>
    <property type="match status" value="1"/>
</dbReference>
<dbReference type="Gene3D" id="2.170.150.10">
    <property type="entry name" value="Metal Binding Protein, Guanine Nucleotide Exchange Factor, Chain A"/>
    <property type="match status" value="1"/>
</dbReference>
<dbReference type="InterPro" id="IPR011057">
    <property type="entry name" value="Mss4-like_sf"/>
</dbReference>
<dbReference type="InterPro" id="IPR011323">
    <property type="entry name" value="Mss4/transl-control_tumour"/>
</dbReference>
<dbReference type="InterPro" id="IPR034737">
    <property type="entry name" value="TCTP"/>
</dbReference>
<dbReference type="InterPro" id="IPR018103">
    <property type="entry name" value="Translation_control_tumour_CS"/>
</dbReference>
<dbReference type="InterPro" id="IPR018105">
    <property type="entry name" value="Translational_control_tumour_p"/>
</dbReference>
<dbReference type="PANTHER" id="PTHR11991">
    <property type="entry name" value="TRANSLATIONALLY CONTROLLED TUMOR PROTEIN-RELATED"/>
    <property type="match status" value="1"/>
</dbReference>
<dbReference type="PANTHER" id="PTHR11991:SF0">
    <property type="entry name" value="TRANSLATIONALLY-CONTROLLED TUMOR PROTEIN"/>
    <property type="match status" value="1"/>
</dbReference>
<dbReference type="Pfam" id="PF00838">
    <property type="entry name" value="TCTP"/>
    <property type="match status" value="1"/>
</dbReference>
<dbReference type="PRINTS" id="PR01653">
    <property type="entry name" value="TCTPROTEIN"/>
</dbReference>
<dbReference type="SUPFAM" id="SSF51316">
    <property type="entry name" value="Mss4-like"/>
    <property type="match status" value="1"/>
</dbReference>
<dbReference type="PROSITE" id="PS01002">
    <property type="entry name" value="TCTP_1"/>
    <property type="match status" value="1"/>
</dbReference>
<dbReference type="PROSITE" id="PS01003">
    <property type="entry name" value="TCTP_2"/>
    <property type="match status" value="1"/>
</dbReference>
<dbReference type="PROSITE" id="PS51797">
    <property type="entry name" value="TCTP_3"/>
    <property type="match status" value="1"/>
</dbReference>
<name>TCTP_DROME</name>
<sequence>MKIYKDIITGDEMFADTYKMKLVDDVIYEVYGKLITRQGDDIKLEGANASAEEADEGTDITSESGVDVVLNHRLTECFAFGDKKSYTLYLKDYMKKVLAKLEEKSPDQVDIFKTNMNKAMKDILGRFKELQFFTGESMDCDGMVALVEYREINGDSVPVLMFFKHGLEEEKC</sequence>
<keyword id="KW-0106">Calcium</keyword>
<keyword id="KW-0963">Cytoplasm</keyword>
<keyword id="KW-0597">Phosphoprotein</keyword>
<keyword id="KW-1185">Reference proteome</keyword>
<reference key="1">
    <citation type="journal article" date="2000" name="Science">
        <title>The genome sequence of Drosophila melanogaster.</title>
        <authorList>
            <person name="Adams M.D."/>
            <person name="Celniker S.E."/>
            <person name="Holt R.A."/>
            <person name="Evans C.A."/>
            <person name="Gocayne J.D."/>
            <person name="Amanatides P.G."/>
            <person name="Scherer S.E."/>
            <person name="Li P.W."/>
            <person name="Hoskins R.A."/>
            <person name="Galle R.F."/>
            <person name="George R.A."/>
            <person name="Lewis S.E."/>
            <person name="Richards S."/>
            <person name="Ashburner M."/>
            <person name="Henderson S.N."/>
            <person name="Sutton G.G."/>
            <person name="Wortman J.R."/>
            <person name="Yandell M.D."/>
            <person name="Zhang Q."/>
            <person name="Chen L.X."/>
            <person name="Brandon R.C."/>
            <person name="Rogers Y.-H.C."/>
            <person name="Blazej R.G."/>
            <person name="Champe M."/>
            <person name="Pfeiffer B.D."/>
            <person name="Wan K.H."/>
            <person name="Doyle C."/>
            <person name="Baxter E.G."/>
            <person name="Helt G."/>
            <person name="Nelson C.R."/>
            <person name="Miklos G.L.G."/>
            <person name="Abril J.F."/>
            <person name="Agbayani A."/>
            <person name="An H.-J."/>
            <person name="Andrews-Pfannkoch C."/>
            <person name="Baldwin D."/>
            <person name="Ballew R.M."/>
            <person name="Basu A."/>
            <person name="Baxendale J."/>
            <person name="Bayraktaroglu L."/>
            <person name="Beasley E.M."/>
            <person name="Beeson K.Y."/>
            <person name="Benos P.V."/>
            <person name="Berman B.P."/>
            <person name="Bhandari D."/>
            <person name="Bolshakov S."/>
            <person name="Borkova D."/>
            <person name="Botchan M.R."/>
            <person name="Bouck J."/>
            <person name="Brokstein P."/>
            <person name="Brottier P."/>
            <person name="Burtis K.C."/>
            <person name="Busam D.A."/>
            <person name="Butler H."/>
            <person name="Cadieu E."/>
            <person name="Center A."/>
            <person name="Chandra I."/>
            <person name="Cherry J.M."/>
            <person name="Cawley S."/>
            <person name="Dahlke C."/>
            <person name="Davenport L.B."/>
            <person name="Davies P."/>
            <person name="de Pablos B."/>
            <person name="Delcher A."/>
            <person name="Deng Z."/>
            <person name="Mays A.D."/>
            <person name="Dew I."/>
            <person name="Dietz S.M."/>
            <person name="Dodson K."/>
            <person name="Doup L.E."/>
            <person name="Downes M."/>
            <person name="Dugan-Rocha S."/>
            <person name="Dunkov B.C."/>
            <person name="Dunn P."/>
            <person name="Durbin K.J."/>
            <person name="Evangelista C.C."/>
            <person name="Ferraz C."/>
            <person name="Ferriera S."/>
            <person name="Fleischmann W."/>
            <person name="Fosler C."/>
            <person name="Gabrielian A.E."/>
            <person name="Garg N.S."/>
            <person name="Gelbart W.M."/>
            <person name="Glasser K."/>
            <person name="Glodek A."/>
            <person name="Gong F."/>
            <person name="Gorrell J.H."/>
            <person name="Gu Z."/>
            <person name="Guan P."/>
            <person name="Harris M."/>
            <person name="Harris N.L."/>
            <person name="Harvey D.A."/>
            <person name="Heiman T.J."/>
            <person name="Hernandez J.R."/>
            <person name="Houck J."/>
            <person name="Hostin D."/>
            <person name="Houston K.A."/>
            <person name="Howland T.J."/>
            <person name="Wei M.-H."/>
            <person name="Ibegwam C."/>
            <person name="Jalali M."/>
            <person name="Kalush F."/>
            <person name="Karpen G.H."/>
            <person name="Ke Z."/>
            <person name="Kennison J.A."/>
            <person name="Ketchum K.A."/>
            <person name="Kimmel B.E."/>
            <person name="Kodira C.D."/>
            <person name="Kraft C.L."/>
            <person name="Kravitz S."/>
            <person name="Kulp D."/>
            <person name="Lai Z."/>
            <person name="Lasko P."/>
            <person name="Lei Y."/>
            <person name="Levitsky A.A."/>
            <person name="Li J.H."/>
            <person name="Li Z."/>
            <person name="Liang Y."/>
            <person name="Lin X."/>
            <person name="Liu X."/>
            <person name="Mattei B."/>
            <person name="McIntosh T.C."/>
            <person name="McLeod M.P."/>
            <person name="McPherson D."/>
            <person name="Merkulov G."/>
            <person name="Milshina N.V."/>
            <person name="Mobarry C."/>
            <person name="Morris J."/>
            <person name="Moshrefi A."/>
            <person name="Mount S.M."/>
            <person name="Moy M."/>
            <person name="Murphy B."/>
            <person name="Murphy L."/>
            <person name="Muzny D.M."/>
            <person name="Nelson D.L."/>
            <person name="Nelson D.R."/>
            <person name="Nelson K.A."/>
            <person name="Nixon K."/>
            <person name="Nusskern D.R."/>
            <person name="Pacleb J.M."/>
            <person name="Palazzolo M."/>
            <person name="Pittman G.S."/>
            <person name="Pan S."/>
            <person name="Pollard J."/>
            <person name="Puri V."/>
            <person name="Reese M.G."/>
            <person name="Reinert K."/>
            <person name="Remington K."/>
            <person name="Saunders R.D.C."/>
            <person name="Scheeler F."/>
            <person name="Shen H."/>
            <person name="Shue B.C."/>
            <person name="Siden-Kiamos I."/>
            <person name="Simpson M."/>
            <person name="Skupski M.P."/>
            <person name="Smith T.J."/>
            <person name="Spier E."/>
            <person name="Spradling A.C."/>
            <person name="Stapleton M."/>
            <person name="Strong R."/>
            <person name="Sun E."/>
            <person name="Svirskas R."/>
            <person name="Tector C."/>
            <person name="Turner R."/>
            <person name="Venter E."/>
            <person name="Wang A.H."/>
            <person name="Wang X."/>
            <person name="Wang Z.-Y."/>
            <person name="Wassarman D.A."/>
            <person name="Weinstock G.M."/>
            <person name="Weissenbach J."/>
            <person name="Williams S.M."/>
            <person name="Woodage T."/>
            <person name="Worley K.C."/>
            <person name="Wu D."/>
            <person name="Yang S."/>
            <person name="Yao Q.A."/>
            <person name="Ye J."/>
            <person name="Yeh R.-F."/>
            <person name="Zaveri J.S."/>
            <person name="Zhan M."/>
            <person name="Zhang G."/>
            <person name="Zhao Q."/>
            <person name="Zheng L."/>
            <person name="Zheng X.H."/>
            <person name="Zhong F.N."/>
            <person name="Zhong W."/>
            <person name="Zhou X."/>
            <person name="Zhu S.C."/>
            <person name="Zhu X."/>
            <person name="Smith H.O."/>
            <person name="Gibbs R.A."/>
            <person name="Myers E.W."/>
            <person name="Rubin G.M."/>
            <person name="Venter J.C."/>
        </authorList>
    </citation>
    <scope>NUCLEOTIDE SEQUENCE [LARGE SCALE GENOMIC DNA]</scope>
    <source>
        <strain>Berkeley</strain>
    </source>
</reference>
<reference key="2">
    <citation type="journal article" date="2002" name="Genome Biol.">
        <title>Annotation of the Drosophila melanogaster euchromatic genome: a systematic review.</title>
        <authorList>
            <person name="Misra S."/>
            <person name="Crosby M.A."/>
            <person name="Mungall C.J."/>
            <person name="Matthews B.B."/>
            <person name="Campbell K.S."/>
            <person name="Hradecky P."/>
            <person name="Huang Y."/>
            <person name="Kaminker J.S."/>
            <person name="Millburn G.H."/>
            <person name="Prochnik S.E."/>
            <person name="Smith C.D."/>
            <person name="Tupy J.L."/>
            <person name="Whitfield E.J."/>
            <person name="Bayraktaroglu L."/>
            <person name="Berman B.P."/>
            <person name="Bettencourt B.R."/>
            <person name="Celniker S.E."/>
            <person name="de Grey A.D.N.J."/>
            <person name="Drysdale R.A."/>
            <person name="Harris N.L."/>
            <person name="Richter J."/>
            <person name="Russo S."/>
            <person name="Schroeder A.J."/>
            <person name="Shu S.Q."/>
            <person name="Stapleton M."/>
            <person name="Yamada C."/>
            <person name="Ashburner M."/>
            <person name="Gelbart W.M."/>
            <person name="Rubin G.M."/>
            <person name="Lewis S.E."/>
        </authorList>
    </citation>
    <scope>GENOME REANNOTATION</scope>
    <source>
        <strain>Berkeley</strain>
    </source>
</reference>
<reference key="3">
    <citation type="journal article" date="2002" name="Genome Biol.">
        <title>A Drosophila full-length cDNA resource.</title>
        <authorList>
            <person name="Stapleton M."/>
            <person name="Carlson J.W."/>
            <person name="Brokstein P."/>
            <person name="Yu C."/>
            <person name="Champe M."/>
            <person name="George R.A."/>
            <person name="Guarin H."/>
            <person name="Kronmiller B."/>
            <person name="Pacleb J.M."/>
            <person name="Park S."/>
            <person name="Wan K.H."/>
            <person name="Rubin G.M."/>
            <person name="Celniker S.E."/>
        </authorList>
    </citation>
    <scope>NUCLEOTIDE SEQUENCE [LARGE SCALE MRNA]</scope>
    <source>
        <strain>Berkeley</strain>
        <tissue>Ovary</tissue>
    </source>
</reference>
<reference key="4">
    <citation type="submission" date="2005-08" db="EMBL/GenBank/DDBJ databases">
        <authorList>
            <person name="Stapleton M."/>
            <person name="Carlson J.W."/>
            <person name="Chavez C."/>
            <person name="Frise E."/>
            <person name="George R.A."/>
            <person name="Pacleb J.M."/>
            <person name="Park S."/>
            <person name="Wan K.H."/>
            <person name="Yu C."/>
            <person name="Celniker S.E."/>
        </authorList>
    </citation>
    <scope>SEQUENCE REVISION</scope>
</reference>
<reference key="5">
    <citation type="journal article" date="2007" name="Mol. Biosyst.">
        <title>An integrated chemical, mass spectrometric and computational strategy for (quantitative) phosphoproteomics: application to Drosophila melanogaster Kc167 cells.</title>
        <authorList>
            <person name="Bodenmiller B."/>
            <person name="Mueller L.N."/>
            <person name="Pedrioli P.G.A."/>
            <person name="Pflieger D."/>
            <person name="Juenger M.A."/>
            <person name="Eng J.K."/>
            <person name="Aebersold R."/>
            <person name="Tao W.A."/>
        </authorList>
    </citation>
    <scope>PHOSPHORYLATION [LARGE SCALE ANALYSIS] AT SER-50</scope>
    <scope>IDENTIFICATION BY MASS SPECTROMETRY</scope>
</reference>
<reference key="6">
    <citation type="journal article" date="2008" name="J. Proteome Res.">
        <title>Phosphoproteome analysis of Drosophila melanogaster embryos.</title>
        <authorList>
            <person name="Zhai B."/>
            <person name="Villen J."/>
            <person name="Beausoleil S.A."/>
            <person name="Mintseris J."/>
            <person name="Gygi S.P."/>
        </authorList>
    </citation>
    <scope>PHOSPHORYLATION [LARGE SCALE ANALYSIS] AT SER-50; THR-58 AND THR-61</scope>
    <scope>IDENTIFICATION BY MASS SPECTROMETRY</scope>
    <source>
        <tissue>Embryo</tissue>
    </source>
</reference>
<feature type="chain" id="PRO_0000211283" description="Translationally-controlled tumor protein homolog">
    <location>
        <begin position="1"/>
        <end position="172"/>
    </location>
</feature>
<feature type="domain" description="TCTP" evidence="2">
    <location>
        <begin position="1"/>
        <end position="172"/>
    </location>
</feature>
<feature type="modified residue" description="Phosphoserine" evidence="3 4">
    <location>
        <position position="50"/>
    </location>
</feature>
<feature type="modified residue" description="Phosphothreonine" evidence="4">
    <location>
        <position position="58"/>
    </location>
</feature>
<feature type="modified residue" description="Phosphothreonine" evidence="4">
    <location>
        <position position="61"/>
    </location>
</feature>
<feature type="sequence conflict" description="In Ref. 3; AAZ67515." evidence="5" ref="3">
    <original>K</original>
    <variation>N</variation>
    <location>
        <position position="91"/>
    </location>
</feature>
<protein>
    <recommendedName>
        <fullName>Translationally-controlled tumor protein homolog</fullName>
        <shortName>TCTP</shortName>
    </recommendedName>
</protein>
<comment type="function">
    <text evidence="1">Involved in calcium binding and microtubule stabilization.</text>
</comment>
<comment type="interaction">
    <interactant intactId="EBI-100452">
        <id>Q9VGS2</id>
    </interactant>
    <interactant intactId="EBI-4372932">
        <id>Q9VND8</id>
        <label>Rheb</label>
    </interactant>
    <organismsDiffer>false</organismsDiffer>
    <experiments>5</experiments>
</comment>
<comment type="interaction">
    <interactant intactId="EBI-100452">
        <id>Q9VGS2</id>
    </interactant>
    <interactant intactId="EBI-84891">
        <id>Q9VQ93</id>
        <label>sau</label>
    </interactant>
    <organismsDiffer>false</organismsDiffer>
    <experiments>4</experiments>
</comment>
<comment type="subcellular location">
    <subcellularLocation>
        <location evidence="1">Cytoplasm</location>
    </subcellularLocation>
</comment>
<comment type="similarity">
    <text evidence="2">Belongs to the TCTP family.</text>
</comment>
<organism>
    <name type="scientific">Drosophila melanogaster</name>
    <name type="common">Fruit fly</name>
    <dbReference type="NCBI Taxonomy" id="7227"/>
    <lineage>
        <taxon>Eukaryota</taxon>
        <taxon>Metazoa</taxon>
        <taxon>Ecdysozoa</taxon>
        <taxon>Arthropoda</taxon>
        <taxon>Hexapoda</taxon>
        <taxon>Insecta</taxon>
        <taxon>Pterygota</taxon>
        <taxon>Neoptera</taxon>
        <taxon>Endopterygota</taxon>
        <taxon>Diptera</taxon>
        <taxon>Brachycera</taxon>
        <taxon>Muscomorpha</taxon>
        <taxon>Ephydroidea</taxon>
        <taxon>Drosophilidae</taxon>
        <taxon>Drosophila</taxon>
        <taxon>Sophophora</taxon>
    </lineage>
</organism>
<gene>
    <name type="primary">Tctp</name>
    <name type="ORF">CG4800</name>
</gene>